<protein>
    <recommendedName>
        <fullName evidence="1">UDP-3-O-acylglucosamine N-acyltransferase</fullName>
        <ecNumber evidence="1">2.3.1.191</ecNumber>
    </recommendedName>
</protein>
<feature type="chain" id="PRO_0000264396" description="UDP-3-O-acylglucosamine N-acyltransferase">
    <location>
        <begin position="1"/>
        <end position="350"/>
    </location>
</feature>
<feature type="active site" description="Proton acceptor" evidence="1">
    <location>
        <position position="240"/>
    </location>
</feature>
<sequence length="350" mass="37051">MNKSYSLREIVSTLGGELLGKDDVLISRVASLANAQPGQISFLTDSKYRSVLATTNASAVILTPQNRDITALPRILTDNPYAYFAKVSDLLNPKPEYVAGVDDTAVIAPSAQVPASCTIMAKAVVGANVVLGEHVVVHPGCVIGEGVEIGAHSVLHANVTIYHHCMIGERCNIFSGSVIGGDGFGYAPEEGRWVKIPQVGRVVIEHDVDIGANTTIDRGAIDDTIIHEGCKIDNLVQIGHNCRIGAHSVIAGCVGIAGSAVLGKHCRIGGAAMILGHLEIADGVTVSPGSMITRSLMKAGTYTALMPFQSHDEWLRTAAGIRRLGELAERVKQLEKQLAPQQVSGIQRDK</sequence>
<keyword id="KW-0012">Acyltransferase</keyword>
<keyword id="KW-0441">Lipid A biosynthesis</keyword>
<keyword id="KW-0444">Lipid biosynthesis</keyword>
<keyword id="KW-0443">Lipid metabolism</keyword>
<keyword id="KW-1185">Reference proteome</keyword>
<keyword id="KW-0677">Repeat</keyword>
<keyword id="KW-0808">Transferase</keyword>
<reference key="1">
    <citation type="submission" date="2006-03" db="EMBL/GenBank/DDBJ databases">
        <title>Complete sequence of Methylobacillus flagellatus KT.</title>
        <authorList>
            <consortium name="US DOE Joint Genome Institute"/>
            <person name="Copeland A."/>
            <person name="Lucas S."/>
            <person name="Lapidus A."/>
            <person name="Barry K."/>
            <person name="Detter J.C."/>
            <person name="Glavina del Rio T."/>
            <person name="Hammon N."/>
            <person name="Israni S."/>
            <person name="Dalin E."/>
            <person name="Tice H."/>
            <person name="Pitluck S."/>
            <person name="Brettin T."/>
            <person name="Bruce D."/>
            <person name="Han C."/>
            <person name="Tapia R."/>
            <person name="Saunders E."/>
            <person name="Gilna P."/>
            <person name="Schmutz J."/>
            <person name="Larimer F."/>
            <person name="Land M."/>
            <person name="Kyrpides N."/>
            <person name="Anderson I."/>
            <person name="Richardson P."/>
        </authorList>
    </citation>
    <scope>NUCLEOTIDE SEQUENCE [LARGE SCALE GENOMIC DNA]</scope>
    <source>
        <strain>ATCC 51484 / DSM 6875 / VKM B-1610 / KT</strain>
    </source>
</reference>
<dbReference type="EC" id="2.3.1.191" evidence="1"/>
<dbReference type="EMBL" id="CP000284">
    <property type="protein sequence ID" value="ABE49788.1"/>
    <property type="molecule type" value="Genomic_DNA"/>
</dbReference>
<dbReference type="RefSeq" id="WP_011479742.1">
    <property type="nucleotide sequence ID" value="NC_007947.1"/>
</dbReference>
<dbReference type="SMR" id="Q1H149"/>
<dbReference type="STRING" id="265072.Mfla_1520"/>
<dbReference type="KEGG" id="mfa:Mfla_1520"/>
<dbReference type="eggNOG" id="COG1044">
    <property type="taxonomic scope" value="Bacteria"/>
</dbReference>
<dbReference type="HOGENOM" id="CLU_049865_0_1_4"/>
<dbReference type="OrthoDB" id="9784739at2"/>
<dbReference type="UniPathway" id="UPA00973"/>
<dbReference type="Proteomes" id="UP000002440">
    <property type="component" value="Chromosome"/>
</dbReference>
<dbReference type="GO" id="GO:0016020">
    <property type="term" value="C:membrane"/>
    <property type="evidence" value="ECO:0007669"/>
    <property type="project" value="GOC"/>
</dbReference>
<dbReference type="GO" id="GO:0016410">
    <property type="term" value="F:N-acyltransferase activity"/>
    <property type="evidence" value="ECO:0007669"/>
    <property type="project" value="InterPro"/>
</dbReference>
<dbReference type="GO" id="GO:0009245">
    <property type="term" value="P:lipid A biosynthetic process"/>
    <property type="evidence" value="ECO:0007669"/>
    <property type="project" value="UniProtKB-UniRule"/>
</dbReference>
<dbReference type="CDD" id="cd03352">
    <property type="entry name" value="LbH_LpxD"/>
    <property type="match status" value="1"/>
</dbReference>
<dbReference type="Gene3D" id="1.20.5.170">
    <property type="match status" value="1"/>
</dbReference>
<dbReference type="Gene3D" id="2.160.10.10">
    <property type="entry name" value="Hexapeptide repeat proteins"/>
    <property type="match status" value="1"/>
</dbReference>
<dbReference type="Gene3D" id="3.40.1390.10">
    <property type="entry name" value="MurE/MurF, N-terminal domain"/>
    <property type="match status" value="1"/>
</dbReference>
<dbReference type="HAMAP" id="MF_00523">
    <property type="entry name" value="LpxD"/>
    <property type="match status" value="1"/>
</dbReference>
<dbReference type="InterPro" id="IPR001451">
    <property type="entry name" value="Hexapep"/>
</dbReference>
<dbReference type="InterPro" id="IPR018357">
    <property type="entry name" value="Hexapep_transf_CS"/>
</dbReference>
<dbReference type="InterPro" id="IPR007691">
    <property type="entry name" value="LpxD"/>
</dbReference>
<dbReference type="InterPro" id="IPR011004">
    <property type="entry name" value="Trimer_LpxA-like_sf"/>
</dbReference>
<dbReference type="InterPro" id="IPR020573">
    <property type="entry name" value="UDP_GlcNAc_AcTrfase_non-rep"/>
</dbReference>
<dbReference type="NCBIfam" id="TIGR01853">
    <property type="entry name" value="lipid_A_lpxD"/>
    <property type="match status" value="1"/>
</dbReference>
<dbReference type="NCBIfam" id="NF002060">
    <property type="entry name" value="PRK00892.1"/>
    <property type="match status" value="1"/>
</dbReference>
<dbReference type="PANTHER" id="PTHR43378">
    <property type="entry name" value="UDP-3-O-ACYLGLUCOSAMINE N-ACYLTRANSFERASE"/>
    <property type="match status" value="1"/>
</dbReference>
<dbReference type="PANTHER" id="PTHR43378:SF2">
    <property type="entry name" value="UDP-3-O-ACYLGLUCOSAMINE N-ACYLTRANSFERASE 1, MITOCHONDRIAL-RELATED"/>
    <property type="match status" value="1"/>
</dbReference>
<dbReference type="Pfam" id="PF00132">
    <property type="entry name" value="Hexapep"/>
    <property type="match status" value="2"/>
</dbReference>
<dbReference type="Pfam" id="PF04613">
    <property type="entry name" value="LpxD"/>
    <property type="match status" value="1"/>
</dbReference>
<dbReference type="SUPFAM" id="SSF51161">
    <property type="entry name" value="Trimeric LpxA-like enzymes"/>
    <property type="match status" value="1"/>
</dbReference>
<dbReference type="PROSITE" id="PS00101">
    <property type="entry name" value="HEXAPEP_TRANSFERASES"/>
    <property type="match status" value="1"/>
</dbReference>
<accession>Q1H149</accession>
<proteinExistence type="inferred from homology"/>
<organism>
    <name type="scientific">Methylobacillus flagellatus (strain ATCC 51484 / DSM 6875 / VKM B-1610 / KT)</name>
    <dbReference type="NCBI Taxonomy" id="265072"/>
    <lineage>
        <taxon>Bacteria</taxon>
        <taxon>Pseudomonadati</taxon>
        <taxon>Pseudomonadota</taxon>
        <taxon>Betaproteobacteria</taxon>
        <taxon>Nitrosomonadales</taxon>
        <taxon>Methylophilaceae</taxon>
        <taxon>Methylobacillus</taxon>
    </lineage>
</organism>
<comment type="function">
    <text evidence="1">Catalyzes the N-acylation of UDP-3-O-acylglucosamine using 3-hydroxyacyl-ACP as the acyl donor. Is involved in the biosynthesis of lipid A, a phosphorylated glycolipid that anchors the lipopolysaccharide to the outer membrane of the cell.</text>
</comment>
<comment type="catalytic activity">
    <reaction evidence="1">
        <text>a UDP-3-O-[(3R)-3-hydroxyacyl]-alpha-D-glucosamine + a (3R)-hydroxyacyl-[ACP] = a UDP-2-N,3-O-bis[(3R)-3-hydroxyacyl]-alpha-D-glucosamine + holo-[ACP] + H(+)</text>
        <dbReference type="Rhea" id="RHEA:53836"/>
        <dbReference type="Rhea" id="RHEA-COMP:9685"/>
        <dbReference type="Rhea" id="RHEA-COMP:9945"/>
        <dbReference type="ChEBI" id="CHEBI:15378"/>
        <dbReference type="ChEBI" id="CHEBI:64479"/>
        <dbReference type="ChEBI" id="CHEBI:78827"/>
        <dbReference type="ChEBI" id="CHEBI:137740"/>
        <dbReference type="ChEBI" id="CHEBI:137748"/>
        <dbReference type="EC" id="2.3.1.191"/>
    </reaction>
</comment>
<comment type="pathway">
    <text evidence="1">Bacterial outer membrane biogenesis; LPS lipid A biosynthesis.</text>
</comment>
<comment type="subunit">
    <text evidence="1">Homotrimer.</text>
</comment>
<comment type="similarity">
    <text evidence="1">Belongs to the transferase hexapeptide repeat family. LpxD subfamily.</text>
</comment>
<gene>
    <name evidence="1" type="primary">lpxD</name>
    <name type="ordered locus">Mfla_1520</name>
</gene>
<name>LPXD_METFK</name>
<evidence type="ECO:0000255" key="1">
    <source>
        <dbReference type="HAMAP-Rule" id="MF_00523"/>
    </source>
</evidence>